<gene>
    <name evidence="1" type="primary">argB</name>
    <name type="ordered locus">BL1062</name>
</gene>
<feature type="chain" id="PRO_0000112591" description="Acetylglutamate kinase">
    <location>
        <begin position="1"/>
        <end position="305"/>
    </location>
</feature>
<feature type="binding site" evidence="1">
    <location>
        <begin position="67"/>
        <end position="68"/>
    </location>
    <ligand>
        <name>substrate</name>
    </ligand>
</feature>
<feature type="binding site" evidence="1">
    <location>
        <position position="89"/>
    </location>
    <ligand>
        <name>substrate</name>
    </ligand>
</feature>
<feature type="binding site" evidence="1">
    <location>
        <position position="190"/>
    </location>
    <ligand>
        <name>substrate</name>
    </ligand>
</feature>
<feature type="site" description="Transition state stabilizer" evidence="1">
    <location>
        <position position="32"/>
    </location>
</feature>
<feature type="site" description="Transition state stabilizer" evidence="1">
    <location>
        <position position="251"/>
    </location>
</feature>
<proteinExistence type="inferred from homology"/>
<keyword id="KW-0028">Amino-acid biosynthesis</keyword>
<keyword id="KW-0055">Arginine biosynthesis</keyword>
<keyword id="KW-0067">ATP-binding</keyword>
<keyword id="KW-0963">Cytoplasm</keyword>
<keyword id="KW-0418">Kinase</keyword>
<keyword id="KW-0547">Nucleotide-binding</keyword>
<keyword id="KW-1185">Reference proteome</keyword>
<keyword id="KW-0808">Transferase</keyword>
<accession>P59295</accession>
<comment type="function">
    <text evidence="1">Catalyzes the ATP-dependent phosphorylation of N-acetyl-L-glutamate.</text>
</comment>
<comment type="catalytic activity">
    <reaction evidence="1">
        <text>N-acetyl-L-glutamate + ATP = N-acetyl-L-glutamyl 5-phosphate + ADP</text>
        <dbReference type="Rhea" id="RHEA:14629"/>
        <dbReference type="ChEBI" id="CHEBI:30616"/>
        <dbReference type="ChEBI" id="CHEBI:44337"/>
        <dbReference type="ChEBI" id="CHEBI:57936"/>
        <dbReference type="ChEBI" id="CHEBI:456216"/>
        <dbReference type="EC" id="2.7.2.8"/>
    </reaction>
</comment>
<comment type="pathway">
    <text evidence="1">Amino-acid biosynthesis; L-arginine biosynthesis; N(2)-acetyl-L-ornithine from L-glutamate: step 2/4.</text>
</comment>
<comment type="subcellular location">
    <subcellularLocation>
        <location evidence="1">Cytoplasm</location>
    </subcellularLocation>
</comment>
<comment type="similarity">
    <text evidence="1">Belongs to the acetylglutamate kinase family. ArgB subfamily.</text>
</comment>
<comment type="sequence caution" evidence="2">
    <conflict type="erroneous initiation">
        <sequence resource="EMBL-CDS" id="AAN24870"/>
    </conflict>
</comment>
<name>ARGB_BIFLO</name>
<organism>
    <name type="scientific">Bifidobacterium longum (strain NCC 2705)</name>
    <dbReference type="NCBI Taxonomy" id="206672"/>
    <lineage>
        <taxon>Bacteria</taxon>
        <taxon>Bacillati</taxon>
        <taxon>Actinomycetota</taxon>
        <taxon>Actinomycetes</taxon>
        <taxon>Bifidobacteriales</taxon>
        <taxon>Bifidobacteriaceae</taxon>
        <taxon>Bifidobacterium</taxon>
    </lineage>
</organism>
<protein>
    <recommendedName>
        <fullName evidence="1">Acetylglutamate kinase</fullName>
        <ecNumber evidence="1">2.7.2.8</ecNumber>
    </recommendedName>
    <alternativeName>
        <fullName evidence="1">N-acetyl-L-glutamate 5-phosphotransferase</fullName>
    </alternativeName>
    <alternativeName>
        <fullName evidence="1">NAG kinase</fullName>
        <shortName evidence="1">NAGK</shortName>
    </alternativeName>
</protein>
<reference key="1">
    <citation type="journal article" date="2002" name="Proc. Natl. Acad. Sci. U.S.A.">
        <title>The genome sequence of Bifidobacterium longum reflects its adaptation to the human gastrointestinal tract.</title>
        <authorList>
            <person name="Schell M.A."/>
            <person name="Karmirantzou M."/>
            <person name="Snel B."/>
            <person name="Vilanova D."/>
            <person name="Berger B."/>
            <person name="Pessi G."/>
            <person name="Zwahlen M.-C."/>
            <person name="Desiere F."/>
            <person name="Bork P."/>
            <person name="Delley M."/>
            <person name="Pridmore R.D."/>
            <person name="Arigoni F."/>
        </authorList>
    </citation>
    <scope>NUCLEOTIDE SEQUENCE [LARGE SCALE GENOMIC DNA]</scope>
    <source>
        <strain>NCC 2705</strain>
    </source>
</reference>
<sequence>MHTDLRADQKAEVLIEALPWLEEFAGQRIVVKYGGNAMVDDHLKQCFAEDMVFLRQVGLHPIVVHGGGPQISHMLKALGIKSEFKGGLRVTTPEAMDVVRMVLTGKVSRELVGLINAHGPLAVGMSGEDGGLFSAMQRRPVIDGKPTDIGLVGDVVSVDASAVEDLVAAGRIPVVSSVAPNEEDATEVLNVNADSAAAALAAAVGAHKLVILTDVDGLYADWPDKNSLIGRIGVENLRDMLPDLESGMRPKMEACVRAIDGGVPQAHVIDGRKPHSILNEIFTSAGIGTMVMPDEGLEMRSSYGY</sequence>
<dbReference type="EC" id="2.7.2.8" evidence="1"/>
<dbReference type="EMBL" id="AE014295">
    <property type="protein sequence ID" value="AAN24870.1"/>
    <property type="status" value="ALT_INIT"/>
    <property type="molecule type" value="Genomic_DNA"/>
</dbReference>
<dbReference type="RefSeq" id="NP_696234.1">
    <property type="nucleotide sequence ID" value="NC_004307.2"/>
</dbReference>
<dbReference type="SMR" id="P59295"/>
<dbReference type="STRING" id="206672.BL1062"/>
<dbReference type="EnsemblBacteria" id="AAN24870">
    <property type="protein sequence ID" value="AAN24870"/>
    <property type="gene ID" value="BL1062"/>
</dbReference>
<dbReference type="KEGG" id="blo:BL1062"/>
<dbReference type="PATRIC" id="fig|206672.9.peg.769"/>
<dbReference type="HOGENOM" id="CLU_053680_0_1_11"/>
<dbReference type="OrthoDB" id="9803155at2"/>
<dbReference type="UniPathway" id="UPA00068">
    <property type="reaction ID" value="UER00107"/>
</dbReference>
<dbReference type="Proteomes" id="UP000000439">
    <property type="component" value="Chromosome"/>
</dbReference>
<dbReference type="GO" id="GO:0005737">
    <property type="term" value="C:cytoplasm"/>
    <property type="evidence" value="ECO:0007669"/>
    <property type="project" value="UniProtKB-SubCell"/>
</dbReference>
<dbReference type="GO" id="GO:0003991">
    <property type="term" value="F:acetylglutamate kinase activity"/>
    <property type="evidence" value="ECO:0007669"/>
    <property type="project" value="UniProtKB-UniRule"/>
</dbReference>
<dbReference type="GO" id="GO:0005524">
    <property type="term" value="F:ATP binding"/>
    <property type="evidence" value="ECO:0007669"/>
    <property type="project" value="UniProtKB-UniRule"/>
</dbReference>
<dbReference type="GO" id="GO:0042450">
    <property type="term" value="P:arginine biosynthetic process via ornithine"/>
    <property type="evidence" value="ECO:0007669"/>
    <property type="project" value="UniProtKB-UniRule"/>
</dbReference>
<dbReference type="GO" id="GO:0006526">
    <property type="term" value="P:L-arginine biosynthetic process"/>
    <property type="evidence" value="ECO:0007669"/>
    <property type="project" value="UniProtKB-UniPathway"/>
</dbReference>
<dbReference type="CDD" id="cd04250">
    <property type="entry name" value="AAK_NAGK-C"/>
    <property type="match status" value="1"/>
</dbReference>
<dbReference type="FunFam" id="3.40.1160.10:FF:000004">
    <property type="entry name" value="Acetylglutamate kinase"/>
    <property type="match status" value="1"/>
</dbReference>
<dbReference type="Gene3D" id="3.40.1160.10">
    <property type="entry name" value="Acetylglutamate kinase-like"/>
    <property type="match status" value="1"/>
</dbReference>
<dbReference type="HAMAP" id="MF_00082">
    <property type="entry name" value="ArgB"/>
    <property type="match status" value="1"/>
</dbReference>
<dbReference type="InterPro" id="IPR036393">
    <property type="entry name" value="AceGlu_kinase-like_sf"/>
</dbReference>
<dbReference type="InterPro" id="IPR004662">
    <property type="entry name" value="AcgluKinase_fam"/>
</dbReference>
<dbReference type="InterPro" id="IPR037528">
    <property type="entry name" value="ArgB"/>
</dbReference>
<dbReference type="InterPro" id="IPR001048">
    <property type="entry name" value="Asp/Glu/Uridylate_kinase"/>
</dbReference>
<dbReference type="InterPro" id="IPR001057">
    <property type="entry name" value="Glu/AcGlu_kinase"/>
</dbReference>
<dbReference type="InterPro" id="IPR041727">
    <property type="entry name" value="NAGK-C"/>
</dbReference>
<dbReference type="NCBIfam" id="TIGR00761">
    <property type="entry name" value="argB"/>
    <property type="match status" value="1"/>
</dbReference>
<dbReference type="PANTHER" id="PTHR23342">
    <property type="entry name" value="N-ACETYLGLUTAMATE SYNTHASE"/>
    <property type="match status" value="1"/>
</dbReference>
<dbReference type="PANTHER" id="PTHR23342:SF0">
    <property type="entry name" value="N-ACETYLGLUTAMATE SYNTHASE, MITOCHONDRIAL"/>
    <property type="match status" value="1"/>
</dbReference>
<dbReference type="Pfam" id="PF00696">
    <property type="entry name" value="AA_kinase"/>
    <property type="match status" value="1"/>
</dbReference>
<dbReference type="PIRSF" id="PIRSF000728">
    <property type="entry name" value="NAGK"/>
    <property type="match status" value="1"/>
</dbReference>
<dbReference type="PRINTS" id="PR00474">
    <property type="entry name" value="GLU5KINASE"/>
</dbReference>
<dbReference type="SUPFAM" id="SSF53633">
    <property type="entry name" value="Carbamate kinase-like"/>
    <property type="match status" value="1"/>
</dbReference>
<evidence type="ECO:0000255" key="1">
    <source>
        <dbReference type="HAMAP-Rule" id="MF_00082"/>
    </source>
</evidence>
<evidence type="ECO:0000305" key="2"/>